<proteinExistence type="evidence at transcript level"/>
<sequence>MFSSKERFADLFLKRLEMTCGKSFKDSAKLDQYKTLGNMVREYISADWIETNEKSRSNSGKQTYYLSIEFLLGQLLEQNLMNLGVRDVVEAGLKEIGINLEEILQIENDAGLGNGGLGRLAACFLDSLASLNLPGHGMGIRYKHGLFEQKIVDGHQVELPEQWLKNGNVWEVRNADQAVDVPFWGEVHMTEKSGRLHFRHEQATIVTAVPYDIPIIGYETGTVNTLRLWNAEPYAHYHGGNILSYKRETEAVSEFLYPDDTHDEGKILRLKQQYFLVCASLKSIVNNYRKTHKSLSGLHKKVSIHINDTHPALAVPELMRILLDEENMSWEEAWHITVHTISYTNHTTLSEALEKWPIHLFKPLLPRMYMIIEEINERFCRAVWEKYPGDWKRIENMAITAHGVVKMAHLAIVGSYSVNGVAKIHSDILKEREMRDFHLLFPNRFNNKTNGIAHRRWLLKANPGLSAIITEAIGDEWVKQPESLIRLEPYATDPAFIEQFQNNKSKKKQELADLIFCTAGVVVNPESIFDVQVKRLHAYKRQLLNVLHIMYLYNRLKEDSGFSIYPQTFIFGAKASPSYYYAKKIIKLIHSVAEKVNYDPAVKQLIKVVFLENYRVSMAERIFPASDVSEQISTASKEASGTGNMKFMMNGALTIGTHDGANIEILERVGPDCIYTFGLKADEVLSYQENGGYRSREYYQHDRRIRQVADQLINGFFEGEADEFESIFDSLLPHNDEYFVLKDFSSYADAQERIQADYRERRKWSEHSIVNIAHSGYFSSDRTIREYAKDIWGIKPMM</sequence>
<name>PHSG_BACSU</name>
<feature type="chain" id="PRO_0000188549" description="Glycogen phosphorylase">
    <location>
        <begin position="1"/>
        <end position="798"/>
    </location>
</feature>
<feature type="modified residue" description="N6-(pyridoxal phosphate)lysine" evidence="1">
    <location>
        <position position="646"/>
    </location>
</feature>
<dbReference type="EC" id="2.4.1.1"/>
<dbReference type="EMBL" id="Z25795">
    <property type="protein sequence ID" value="CAA81044.1"/>
    <property type="molecule type" value="Genomic_DNA"/>
</dbReference>
<dbReference type="EMBL" id="AF008220">
    <property type="protein sequence ID" value="AAC00218.1"/>
    <property type="molecule type" value="Genomic_DNA"/>
</dbReference>
<dbReference type="EMBL" id="AL009126">
    <property type="protein sequence ID" value="CAB15072.1"/>
    <property type="molecule type" value="Genomic_DNA"/>
</dbReference>
<dbReference type="PIR" id="S40052">
    <property type="entry name" value="S40052"/>
</dbReference>
<dbReference type="RefSeq" id="NP_390972.1">
    <property type="nucleotide sequence ID" value="NC_000964.3"/>
</dbReference>
<dbReference type="RefSeq" id="WP_004399110.1">
    <property type="nucleotide sequence ID" value="NZ_OZ025638.1"/>
</dbReference>
<dbReference type="SMR" id="P39123"/>
<dbReference type="FunCoup" id="P39123">
    <property type="interactions" value="485"/>
</dbReference>
<dbReference type="STRING" id="224308.BSU30940"/>
<dbReference type="CAZy" id="GT35">
    <property type="family name" value="Glycosyltransferase Family 35"/>
</dbReference>
<dbReference type="PaxDb" id="224308-BSU30940"/>
<dbReference type="EnsemblBacteria" id="CAB15072">
    <property type="protein sequence ID" value="CAB15072"/>
    <property type="gene ID" value="BSU_30940"/>
</dbReference>
<dbReference type="GeneID" id="936630"/>
<dbReference type="KEGG" id="bsu:BSU30940"/>
<dbReference type="PATRIC" id="fig|224308.179.peg.3353"/>
<dbReference type="eggNOG" id="COG0058">
    <property type="taxonomic scope" value="Bacteria"/>
</dbReference>
<dbReference type="InParanoid" id="P39123"/>
<dbReference type="OrthoDB" id="9760804at2"/>
<dbReference type="PhylomeDB" id="P39123"/>
<dbReference type="BioCyc" id="BSUB:BSU30940-MONOMER"/>
<dbReference type="Proteomes" id="UP000001570">
    <property type="component" value="Chromosome"/>
</dbReference>
<dbReference type="GO" id="GO:0005737">
    <property type="term" value="C:cytoplasm"/>
    <property type="evidence" value="ECO:0000318"/>
    <property type="project" value="GO_Central"/>
</dbReference>
<dbReference type="GO" id="GO:0008184">
    <property type="term" value="F:glycogen phosphorylase activity"/>
    <property type="evidence" value="ECO:0000318"/>
    <property type="project" value="GO_Central"/>
</dbReference>
<dbReference type="GO" id="GO:0030170">
    <property type="term" value="F:pyridoxal phosphate binding"/>
    <property type="evidence" value="ECO:0000318"/>
    <property type="project" value="GO_Central"/>
</dbReference>
<dbReference type="GO" id="GO:0005980">
    <property type="term" value="P:glycogen catabolic process"/>
    <property type="evidence" value="ECO:0000318"/>
    <property type="project" value="GO_Central"/>
</dbReference>
<dbReference type="CDD" id="cd04300">
    <property type="entry name" value="GT35_Glycogen_Phosphorylase"/>
    <property type="match status" value="1"/>
</dbReference>
<dbReference type="FunFam" id="3.40.50.2000:FF:000003">
    <property type="entry name" value="Alpha-1,4 glucan phosphorylase"/>
    <property type="match status" value="1"/>
</dbReference>
<dbReference type="FunFam" id="3.40.50.2000:FF:000139">
    <property type="entry name" value="Alpha-1,4 glucan phosphorylase"/>
    <property type="match status" value="1"/>
</dbReference>
<dbReference type="Gene3D" id="3.40.50.2000">
    <property type="entry name" value="Glycogen Phosphorylase B"/>
    <property type="match status" value="2"/>
</dbReference>
<dbReference type="InterPro" id="IPR011833">
    <property type="entry name" value="Glycg_phsphrylas"/>
</dbReference>
<dbReference type="InterPro" id="IPR000811">
    <property type="entry name" value="Glyco_trans_35"/>
</dbReference>
<dbReference type="InterPro" id="IPR035090">
    <property type="entry name" value="Pyridoxal_P_attach_site"/>
</dbReference>
<dbReference type="NCBIfam" id="TIGR02093">
    <property type="entry name" value="P_ylase"/>
    <property type="match status" value="1"/>
</dbReference>
<dbReference type="PANTHER" id="PTHR11468">
    <property type="entry name" value="GLYCOGEN PHOSPHORYLASE"/>
    <property type="match status" value="1"/>
</dbReference>
<dbReference type="PANTHER" id="PTHR11468:SF3">
    <property type="entry name" value="GLYCOGEN PHOSPHORYLASE, LIVER FORM"/>
    <property type="match status" value="1"/>
</dbReference>
<dbReference type="Pfam" id="PF00343">
    <property type="entry name" value="Phosphorylase"/>
    <property type="match status" value="1"/>
</dbReference>
<dbReference type="PIRSF" id="PIRSF000460">
    <property type="entry name" value="Pprylas_GlgP"/>
    <property type="match status" value="1"/>
</dbReference>
<dbReference type="SUPFAM" id="SSF53756">
    <property type="entry name" value="UDP-Glycosyltransferase/glycogen phosphorylase"/>
    <property type="match status" value="1"/>
</dbReference>
<dbReference type="PROSITE" id="PS00102">
    <property type="entry name" value="PHOSPHORYLASE"/>
    <property type="match status" value="1"/>
</dbReference>
<protein>
    <recommendedName>
        <fullName>Glycogen phosphorylase</fullName>
        <ecNumber>2.4.1.1</ecNumber>
    </recommendedName>
</protein>
<gene>
    <name type="primary">glgP</name>
    <name type="ordered locus">BSU30940</name>
</gene>
<evidence type="ECO:0000250" key="1"/>
<evidence type="ECO:0000305" key="2"/>
<reference key="1">
    <citation type="journal article" date="1994" name="Mol. Microbiol.">
        <title>Glycogen in Bacillus subtilis: molecular characterization of an operon encoding enzymes involved in glycogen biosynthesis and degradation.</title>
        <authorList>
            <person name="Kiel J.A.K.W."/>
            <person name="Boels J.M."/>
            <person name="Beldman G."/>
            <person name="Venema G."/>
        </authorList>
    </citation>
    <scope>NUCLEOTIDE SEQUENCE [GENOMIC DNA]</scope>
    <source>
        <strain>168</strain>
    </source>
</reference>
<reference key="2">
    <citation type="journal article" date="1997" name="Microbiology">
        <title>Sequencing and functional annotation of the Bacillus subtilis genes in the 200 kb rrnB-dnaB region.</title>
        <authorList>
            <person name="Lapidus A."/>
            <person name="Galleron N."/>
            <person name="Sorokin A."/>
            <person name="Ehrlich S.D."/>
        </authorList>
    </citation>
    <scope>NUCLEOTIDE SEQUENCE [GENOMIC DNA]</scope>
    <source>
        <strain>168</strain>
    </source>
</reference>
<reference key="3">
    <citation type="journal article" date="1997" name="Nature">
        <title>The complete genome sequence of the Gram-positive bacterium Bacillus subtilis.</title>
        <authorList>
            <person name="Kunst F."/>
            <person name="Ogasawara N."/>
            <person name="Moszer I."/>
            <person name="Albertini A.M."/>
            <person name="Alloni G."/>
            <person name="Azevedo V."/>
            <person name="Bertero M.G."/>
            <person name="Bessieres P."/>
            <person name="Bolotin A."/>
            <person name="Borchert S."/>
            <person name="Borriss R."/>
            <person name="Boursier L."/>
            <person name="Brans A."/>
            <person name="Braun M."/>
            <person name="Brignell S.C."/>
            <person name="Bron S."/>
            <person name="Brouillet S."/>
            <person name="Bruschi C.V."/>
            <person name="Caldwell B."/>
            <person name="Capuano V."/>
            <person name="Carter N.M."/>
            <person name="Choi S.-K."/>
            <person name="Codani J.-J."/>
            <person name="Connerton I.F."/>
            <person name="Cummings N.J."/>
            <person name="Daniel R.A."/>
            <person name="Denizot F."/>
            <person name="Devine K.M."/>
            <person name="Duesterhoeft A."/>
            <person name="Ehrlich S.D."/>
            <person name="Emmerson P.T."/>
            <person name="Entian K.-D."/>
            <person name="Errington J."/>
            <person name="Fabret C."/>
            <person name="Ferrari E."/>
            <person name="Foulger D."/>
            <person name="Fritz C."/>
            <person name="Fujita M."/>
            <person name="Fujita Y."/>
            <person name="Fuma S."/>
            <person name="Galizzi A."/>
            <person name="Galleron N."/>
            <person name="Ghim S.-Y."/>
            <person name="Glaser P."/>
            <person name="Goffeau A."/>
            <person name="Golightly E.J."/>
            <person name="Grandi G."/>
            <person name="Guiseppi G."/>
            <person name="Guy B.J."/>
            <person name="Haga K."/>
            <person name="Haiech J."/>
            <person name="Harwood C.R."/>
            <person name="Henaut A."/>
            <person name="Hilbert H."/>
            <person name="Holsappel S."/>
            <person name="Hosono S."/>
            <person name="Hullo M.-F."/>
            <person name="Itaya M."/>
            <person name="Jones L.-M."/>
            <person name="Joris B."/>
            <person name="Karamata D."/>
            <person name="Kasahara Y."/>
            <person name="Klaerr-Blanchard M."/>
            <person name="Klein C."/>
            <person name="Kobayashi Y."/>
            <person name="Koetter P."/>
            <person name="Koningstein G."/>
            <person name="Krogh S."/>
            <person name="Kumano M."/>
            <person name="Kurita K."/>
            <person name="Lapidus A."/>
            <person name="Lardinois S."/>
            <person name="Lauber J."/>
            <person name="Lazarevic V."/>
            <person name="Lee S.-M."/>
            <person name="Levine A."/>
            <person name="Liu H."/>
            <person name="Masuda S."/>
            <person name="Mauel C."/>
            <person name="Medigue C."/>
            <person name="Medina N."/>
            <person name="Mellado R.P."/>
            <person name="Mizuno M."/>
            <person name="Moestl D."/>
            <person name="Nakai S."/>
            <person name="Noback M."/>
            <person name="Noone D."/>
            <person name="O'Reilly M."/>
            <person name="Ogawa K."/>
            <person name="Ogiwara A."/>
            <person name="Oudega B."/>
            <person name="Park S.-H."/>
            <person name="Parro V."/>
            <person name="Pohl T.M."/>
            <person name="Portetelle D."/>
            <person name="Porwollik S."/>
            <person name="Prescott A.M."/>
            <person name="Presecan E."/>
            <person name="Pujic P."/>
            <person name="Purnelle B."/>
            <person name="Rapoport G."/>
            <person name="Rey M."/>
            <person name="Reynolds S."/>
            <person name="Rieger M."/>
            <person name="Rivolta C."/>
            <person name="Rocha E."/>
            <person name="Roche B."/>
            <person name="Rose M."/>
            <person name="Sadaie Y."/>
            <person name="Sato T."/>
            <person name="Scanlan E."/>
            <person name="Schleich S."/>
            <person name="Schroeter R."/>
            <person name="Scoffone F."/>
            <person name="Sekiguchi J."/>
            <person name="Sekowska A."/>
            <person name="Seror S.J."/>
            <person name="Serror P."/>
            <person name="Shin B.-S."/>
            <person name="Soldo B."/>
            <person name="Sorokin A."/>
            <person name="Tacconi E."/>
            <person name="Takagi T."/>
            <person name="Takahashi H."/>
            <person name="Takemaru K."/>
            <person name="Takeuchi M."/>
            <person name="Tamakoshi A."/>
            <person name="Tanaka T."/>
            <person name="Terpstra P."/>
            <person name="Tognoni A."/>
            <person name="Tosato V."/>
            <person name="Uchiyama S."/>
            <person name="Vandenbol M."/>
            <person name="Vannier F."/>
            <person name="Vassarotti A."/>
            <person name="Viari A."/>
            <person name="Wambutt R."/>
            <person name="Wedler E."/>
            <person name="Wedler H."/>
            <person name="Weitzenegger T."/>
            <person name="Winters P."/>
            <person name="Wipat A."/>
            <person name="Yamamoto H."/>
            <person name="Yamane K."/>
            <person name="Yasumoto K."/>
            <person name="Yata K."/>
            <person name="Yoshida K."/>
            <person name="Yoshikawa H.-F."/>
            <person name="Zumstein E."/>
            <person name="Yoshikawa H."/>
            <person name="Danchin A."/>
        </authorList>
    </citation>
    <scope>NUCLEOTIDE SEQUENCE [LARGE SCALE GENOMIC DNA]</scope>
    <source>
        <strain>168</strain>
    </source>
</reference>
<organism>
    <name type="scientific">Bacillus subtilis (strain 168)</name>
    <dbReference type="NCBI Taxonomy" id="224308"/>
    <lineage>
        <taxon>Bacteria</taxon>
        <taxon>Bacillati</taxon>
        <taxon>Bacillota</taxon>
        <taxon>Bacilli</taxon>
        <taxon>Bacillales</taxon>
        <taxon>Bacillaceae</taxon>
        <taxon>Bacillus</taxon>
    </lineage>
</organism>
<comment type="function">
    <text>Phosphorylase is an important allosteric enzyme in carbohydrate metabolism. Enzymes from different sources differ in their regulatory mechanisms and in their natural substrates. However, all known phosphorylases share catalytic and structural properties.</text>
</comment>
<comment type="catalytic activity">
    <reaction>
        <text>[(1-&gt;4)-alpha-D-glucosyl](n) + phosphate = [(1-&gt;4)-alpha-D-glucosyl](n-1) + alpha-D-glucose 1-phosphate</text>
        <dbReference type="Rhea" id="RHEA:41732"/>
        <dbReference type="Rhea" id="RHEA-COMP:9584"/>
        <dbReference type="Rhea" id="RHEA-COMP:9586"/>
        <dbReference type="ChEBI" id="CHEBI:15444"/>
        <dbReference type="ChEBI" id="CHEBI:43474"/>
        <dbReference type="ChEBI" id="CHEBI:58601"/>
        <dbReference type="EC" id="2.4.1.1"/>
    </reaction>
</comment>
<comment type="cofactor">
    <cofactor>
        <name>pyridoxal 5'-phosphate</name>
        <dbReference type="ChEBI" id="CHEBI:597326"/>
    </cofactor>
</comment>
<comment type="induction">
    <text>Expressed exclusively on media containing carbon sources that allow efficient sporulation.</text>
</comment>
<comment type="similarity">
    <text evidence="2">Belongs to the glycogen phosphorylase family.</text>
</comment>
<keyword id="KW-0021">Allosteric enzyme</keyword>
<keyword id="KW-0119">Carbohydrate metabolism</keyword>
<keyword id="KW-0321">Glycogen metabolism</keyword>
<keyword id="KW-0328">Glycosyltransferase</keyword>
<keyword id="KW-0663">Pyridoxal phosphate</keyword>
<keyword id="KW-1185">Reference proteome</keyword>
<keyword id="KW-0808">Transferase</keyword>
<accession>P39123</accession>